<comment type="function">
    <text evidence="2">Involved in base excision repair of DNA damaged by oxidation or by mutagenic agents. Acts as a DNA glycosylase that recognizes and removes damaged bases. Has a preference for oxidized purines, such as 7,8-dihydro-8-oxoguanine (8-oxoG). Has AP (apurinic/apyrimidinic) lyase activity and introduces nicks in the DNA strand. Cleaves the DNA backbone by beta-delta elimination to generate a single-strand break at the site of the removed base with both 3'- and 5'-phosphates.</text>
</comment>
<comment type="catalytic activity">
    <reaction evidence="2">
        <text>Hydrolysis of DNA containing ring-opened 7-methylguanine residues, releasing 2,6-diamino-4-hydroxy-5-(N-methyl)formamidopyrimidine.</text>
        <dbReference type="EC" id="3.2.2.23"/>
    </reaction>
</comment>
<comment type="catalytic activity">
    <reaction evidence="2">
        <text>2'-deoxyribonucleotide-(2'-deoxyribose 5'-phosphate)-2'-deoxyribonucleotide-DNA = a 3'-end 2'-deoxyribonucleotide-(2,3-dehydro-2,3-deoxyribose 5'-phosphate)-DNA + a 5'-end 5'-phospho-2'-deoxyribonucleoside-DNA + H(+)</text>
        <dbReference type="Rhea" id="RHEA:66592"/>
        <dbReference type="Rhea" id="RHEA-COMP:13180"/>
        <dbReference type="Rhea" id="RHEA-COMP:16897"/>
        <dbReference type="Rhea" id="RHEA-COMP:17067"/>
        <dbReference type="ChEBI" id="CHEBI:15378"/>
        <dbReference type="ChEBI" id="CHEBI:136412"/>
        <dbReference type="ChEBI" id="CHEBI:157695"/>
        <dbReference type="ChEBI" id="CHEBI:167181"/>
        <dbReference type="EC" id="4.2.99.18"/>
    </reaction>
</comment>
<comment type="cofactor">
    <cofactor evidence="2">
        <name>Zn(2+)</name>
        <dbReference type="ChEBI" id="CHEBI:29105"/>
    </cofactor>
    <text evidence="2">Binds 1 zinc ion per subunit.</text>
</comment>
<comment type="subunit">
    <text evidence="2">Monomer.</text>
</comment>
<comment type="similarity">
    <text evidence="2">Belongs to the FPG family.</text>
</comment>
<organism>
    <name type="scientific">Pseudomonas putida (strain GB-1)</name>
    <dbReference type="NCBI Taxonomy" id="76869"/>
    <lineage>
        <taxon>Bacteria</taxon>
        <taxon>Pseudomonadati</taxon>
        <taxon>Pseudomonadota</taxon>
        <taxon>Gammaproteobacteria</taxon>
        <taxon>Pseudomonadales</taxon>
        <taxon>Pseudomonadaceae</taxon>
        <taxon>Pseudomonas</taxon>
    </lineage>
</organism>
<dbReference type="EC" id="3.2.2.23" evidence="2"/>
<dbReference type="EC" id="4.2.99.18" evidence="2"/>
<dbReference type="EMBL" id="CP000926">
    <property type="protein sequence ID" value="ABZ01060.1"/>
    <property type="molecule type" value="Genomic_DNA"/>
</dbReference>
<dbReference type="RefSeq" id="WP_012274673.1">
    <property type="nucleotide sequence ID" value="NC_010322.1"/>
</dbReference>
<dbReference type="SMR" id="B0KN79"/>
<dbReference type="KEGG" id="ppg:PputGB1_5175"/>
<dbReference type="eggNOG" id="COG0266">
    <property type="taxonomic scope" value="Bacteria"/>
</dbReference>
<dbReference type="HOGENOM" id="CLU_038423_1_1_6"/>
<dbReference type="Proteomes" id="UP000002157">
    <property type="component" value="Chromosome"/>
</dbReference>
<dbReference type="GO" id="GO:0034039">
    <property type="term" value="F:8-oxo-7,8-dihydroguanine DNA N-glycosylase activity"/>
    <property type="evidence" value="ECO:0007669"/>
    <property type="project" value="TreeGrafter"/>
</dbReference>
<dbReference type="GO" id="GO:0140078">
    <property type="term" value="F:class I DNA-(apurinic or apyrimidinic site) endonuclease activity"/>
    <property type="evidence" value="ECO:0007669"/>
    <property type="project" value="UniProtKB-EC"/>
</dbReference>
<dbReference type="GO" id="GO:0003684">
    <property type="term" value="F:damaged DNA binding"/>
    <property type="evidence" value="ECO:0007669"/>
    <property type="project" value="InterPro"/>
</dbReference>
<dbReference type="GO" id="GO:0008270">
    <property type="term" value="F:zinc ion binding"/>
    <property type="evidence" value="ECO:0007669"/>
    <property type="project" value="UniProtKB-UniRule"/>
</dbReference>
<dbReference type="GO" id="GO:0006284">
    <property type="term" value="P:base-excision repair"/>
    <property type="evidence" value="ECO:0007669"/>
    <property type="project" value="InterPro"/>
</dbReference>
<dbReference type="CDD" id="cd08966">
    <property type="entry name" value="EcFpg-like_N"/>
    <property type="match status" value="1"/>
</dbReference>
<dbReference type="FunFam" id="1.10.8.50:FF:000003">
    <property type="entry name" value="Formamidopyrimidine-DNA glycosylase"/>
    <property type="match status" value="1"/>
</dbReference>
<dbReference type="FunFam" id="3.20.190.10:FF:000001">
    <property type="entry name" value="Formamidopyrimidine-DNA glycosylase"/>
    <property type="match status" value="1"/>
</dbReference>
<dbReference type="Gene3D" id="1.10.8.50">
    <property type="match status" value="1"/>
</dbReference>
<dbReference type="Gene3D" id="3.20.190.10">
    <property type="entry name" value="MutM-like, N-terminal"/>
    <property type="match status" value="1"/>
</dbReference>
<dbReference type="HAMAP" id="MF_00103">
    <property type="entry name" value="Fapy_DNA_glycosyl"/>
    <property type="match status" value="1"/>
</dbReference>
<dbReference type="InterPro" id="IPR015886">
    <property type="entry name" value="DNA_glyclase/AP_lyase_DNA-bd"/>
</dbReference>
<dbReference type="InterPro" id="IPR015887">
    <property type="entry name" value="DNA_glyclase_Znf_dom_DNA_BS"/>
</dbReference>
<dbReference type="InterPro" id="IPR020629">
    <property type="entry name" value="Formamido-pyr_DNA_Glyclase"/>
</dbReference>
<dbReference type="InterPro" id="IPR012319">
    <property type="entry name" value="FPG_cat"/>
</dbReference>
<dbReference type="InterPro" id="IPR035937">
    <property type="entry name" value="MutM-like_N-ter"/>
</dbReference>
<dbReference type="InterPro" id="IPR010979">
    <property type="entry name" value="Ribosomal_uS13-like_H2TH"/>
</dbReference>
<dbReference type="InterPro" id="IPR000214">
    <property type="entry name" value="Znf_DNA_glyclase/AP_lyase"/>
</dbReference>
<dbReference type="InterPro" id="IPR010663">
    <property type="entry name" value="Znf_FPG/IleRS"/>
</dbReference>
<dbReference type="NCBIfam" id="TIGR00577">
    <property type="entry name" value="fpg"/>
    <property type="match status" value="1"/>
</dbReference>
<dbReference type="NCBIfam" id="NF002211">
    <property type="entry name" value="PRK01103.1"/>
    <property type="match status" value="1"/>
</dbReference>
<dbReference type="PANTHER" id="PTHR22993">
    <property type="entry name" value="FORMAMIDOPYRIMIDINE-DNA GLYCOSYLASE"/>
    <property type="match status" value="1"/>
</dbReference>
<dbReference type="PANTHER" id="PTHR22993:SF9">
    <property type="entry name" value="FORMAMIDOPYRIMIDINE-DNA GLYCOSYLASE"/>
    <property type="match status" value="1"/>
</dbReference>
<dbReference type="Pfam" id="PF01149">
    <property type="entry name" value="Fapy_DNA_glyco"/>
    <property type="match status" value="1"/>
</dbReference>
<dbReference type="Pfam" id="PF06831">
    <property type="entry name" value="H2TH"/>
    <property type="match status" value="1"/>
</dbReference>
<dbReference type="Pfam" id="PF06827">
    <property type="entry name" value="zf-FPG_IleRS"/>
    <property type="match status" value="1"/>
</dbReference>
<dbReference type="SMART" id="SM00898">
    <property type="entry name" value="Fapy_DNA_glyco"/>
    <property type="match status" value="1"/>
</dbReference>
<dbReference type="SMART" id="SM01232">
    <property type="entry name" value="H2TH"/>
    <property type="match status" value="1"/>
</dbReference>
<dbReference type="SUPFAM" id="SSF57716">
    <property type="entry name" value="Glucocorticoid receptor-like (DNA-binding domain)"/>
    <property type="match status" value="1"/>
</dbReference>
<dbReference type="SUPFAM" id="SSF81624">
    <property type="entry name" value="N-terminal domain of MutM-like DNA repair proteins"/>
    <property type="match status" value="1"/>
</dbReference>
<dbReference type="SUPFAM" id="SSF46946">
    <property type="entry name" value="S13-like H2TH domain"/>
    <property type="match status" value="1"/>
</dbReference>
<dbReference type="PROSITE" id="PS51068">
    <property type="entry name" value="FPG_CAT"/>
    <property type="match status" value="1"/>
</dbReference>
<dbReference type="PROSITE" id="PS01242">
    <property type="entry name" value="ZF_FPG_1"/>
    <property type="match status" value="1"/>
</dbReference>
<dbReference type="PROSITE" id="PS51066">
    <property type="entry name" value="ZF_FPG_2"/>
    <property type="match status" value="1"/>
</dbReference>
<keyword id="KW-0227">DNA damage</keyword>
<keyword id="KW-0234">DNA repair</keyword>
<keyword id="KW-0238">DNA-binding</keyword>
<keyword id="KW-0326">Glycosidase</keyword>
<keyword id="KW-0378">Hydrolase</keyword>
<keyword id="KW-0456">Lyase</keyword>
<keyword id="KW-0479">Metal-binding</keyword>
<keyword id="KW-0511">Multifunctional enzyme</keyword>
<keyword id="KW-0862">Zinc</keyword>
<keyword id="KW-0863">Zinc-finger</keyword>
<accession>B0KN79</accession>
<protein>
    <recommendedName>
        <fullName evidence="2">Formamidopyrimidine-DNA glycosylase</fullName>
        <shortName evidence="2">Fapy-DNA glycosylase</shortName>
        <ecNumber evidence="2">3.2.2.23</ecNumber>
    </recommendedName>
    <alternativeName>
        <fullName evidence="2">DNA-(apurinic or apyrimidinic site) lyase MutM</fullName>
        <shortName evidence="2">AP lyase MutM</shortName>
        <ecNumber evidence="2">4.2.99.18</ecNumber>
    </alternativeName>
</protein>
<feature type="initiator methionine" description="Removed" evidence="1">
    <location>
        <position position="1"/>
    </location>
</feature>
<feature type="chain" id="PRO_1000075705" description="Formamidopyrimidine-DNA glycosylase">
    <location>
        <begin position="2"/>
        <end position="270"/>
    </location>
</feature>
<feature type="zinc finger region" description="FPG-type" evidence="2">
    <location>
        <begin position="236"/>
        <end position="270"/>
    </location>
</feature>
<feature type="active site" description="Schiff-base intermediate with DNA" evidence="2">
    <location>
        <position position="2"/>
    </location>
</feature>
<feature type="active site" description="Proton donor" evidence="2">
    <location>
        <position position="3"/>
    </location>
</feature>
<feature type="active site" description="Proton donor; for beta-elimination activity" evidence="2">
    <location>
        <position position="58"/>
    </location>
</feature>
<feature type="active site" description="Proton donor; for delta-elimination activity" evidence="2">
    <location>
        <position position="260"/>
    </location>
</feature>
<feature type="binding site" evidence="2">
    <location>
        <position position="91"/>
    </location>
    <ligand>
        <name>DNA</name>
        <dbReference type="ChEBI" id="CHEBI:16991"/>
    </ligand>
</feature>
<feature type="binding site" evidence="2">
    <location>
        <position position="110"/>
    </location>
    <ligand>
        <name>DNA</name>
        <dbReference type="ChEBI" id="CHEBI:16991"/>
    </ligand>
</feature>
<feature type="binding site" evidence="2">
    <location>
        <position position="151"/>
    </location>
    <ligand>
        <name>DNA</name>
        <dbReference type="ChEBI" id="CHEBI:16991"/>
    </ligand>
</feature>
<proteinExistence type="inferred from homology"/>
<name>FPG_PSEPG</name>
<sequence length="270" mass="30120">MPELPEVETTRRGIAPHLEGQRVSRVVVRDRRLRWPIPEDLDVRLSGQRIVSVERRAKYLLINAEVGTLISHLGMSGNLRLVELGLPAAKHEHVDIELESGLMLRYTDPRRFGAMLWSLDPLNHELLLRLGPEPLTDLFDGERLFQLSRGRSMAVKPFIMDNAVVVGVGNIYATEALFAAGIDPRREAGGISRARYLKLAIEIKRVLAAAIEQGGTTLRDFIGGDGQPGYFQQELFVYGRGGQPCKVCGTALREVKLGQRASVYCPRCQR</sequence>
<reference key="1">
    <citation type="submission" date="2008-01" db="EMBL/GenBank/DDBJ databases">
        <title>Complete sequence of Pseudomonas putida GB-1.</title>
        <authorList>
            <consortium name="US DOE Joint Genome Institute"/>
            <person name="Copeland A."/>
            <person name="Lucas S."/>
            <person name="Lapidus A."/>
            <person name="Barry K."/>
            <person name="Glavina del Rio T."/>
            <person name="Dalin E."/>
            <person name="Tice H."/>
            <person name="Pitluck S."/>
            <person name="Bruce D."/>
            <person name="Goodwin L."/>
            <person name="Chertkov O."/>
            <person name="Brettin T."/>
            <person name="Detter J.C."/>
            <person name="Han C."/>
            <person name="Kuske C.R."/>
            <person name="Schmutz J."/>
            <person name="Larimer F."/>
            <person name="Land M."/>
            <person name="Hauser L."/>
            <person name="Kyrpides N."/>
            <person name="Kim E."/>
            <person name="McCarthy J.K."/>
            <person name="Richardson P."/>
        </authorList>
    </citation>
    <scope>NUCLEOTIDE SEQUENCE [LARGE SCALE GENOMIC DNA]</scope>
    <source>
        <strain>GB-1</strain>
    </source>
</reference>
<evidence type="ECO:0000250" key="1"/>
<evidence type="ECO:0000255" key="2">
    <source>
        <dbReference type="HAMAP-Rule" id="MF_00103"/>
    </source>
</evidence>
<gene>
    <name evidence="2" type="primary">mutM</name>
    <name evidence="2" type="synonym">fpg</name>
    <name type="ordered locus">PputGB1_5175</name>
</gene>